<reference key="1">
    <citation type="journal article" date="2003" name="Nature">
        <title>Genome divergence in two Prochlorococcus ecotypes reflects oceanic niche differentiation.</title>
        <authorList>
            <person name="Rocap G."/>
            <person name="Larimer F.W."/>
            <person name="Lamerdin J.E."/>
            <person name="Malfatti S."/>
            <person name="Chain P."/>
            <person name="Ahlgren N.A."/>
            <person name="Arellano A."/>
            <person name="Coleman M."/>
            <person name="Hauser L."/>
            <person name="Hess W.R."/>
            <person name="Johnson Z.I."/>
            <person name="Land M.L."/>
            <person name="Lindell D."/>
            <person name="Post A.F."/>
            <person name="Regala W."/>
            <person name="Shah M."/>
            <person name="Shaw S.L."/>
            <person name="Steglich C."/>
            <person name="Sullivan M.B."/>
            <person name="Ting C.S."/>
            <person name="Tolonen A."/>
            <person name="Webb E.A."/>
            <person name="Zinser E.R."/>
            <person name="Chisholm S.W."/>
        </authorList>
    </citation>
    <scope>NUCLEOTIDE SEQUENCE [LARGE SCALE GENOMIC DNA]</scope>
    <source>
        <strain>MIT 9313</strain>
    </source>
</reference>
<name>RL32_PROMM</name>
<evidence type="ECO:0000255" key="1">
    <source>
        <dbReference type="HAMAP-Rule" id="MF_00340"/>
    </source>
</evidence>
<evidence type="ECO:0000305" key="2"/>
<sequence length="58" mass="6331">MAVPKKKTSKGKRNQRHAIWKAKAATAAQRALSIGKSVLSGRAQGFVYPMQESDDDES</sequence>
<feature type="chain" id="PRO_0000172386" description="Large ribosomal subunit protein bL32">
    <location>
        <begin position="1"/>
        <end position="58"/>
    </location>
</feature>
<accession>Q7V7I8</accession>
<proteinExistence type="inferred from homology"/>
<comment type="similarity">
    <text evidence="1">Belongs to the bacterial ribosomal protein bL32 family.</text>
</comment>
<organism>
    <name type="scientific">Prochlorococcus marinus (strain MIT 9313)</name>
    <dbReference type="NCBI Taxonomy" id="74547"/>
    <lineage>
        <taxon>Bacteria</taxon>
        <taxon>Bacillati</taxon>
        <taxon>Cyanobacteriota</taxon>
        <taxon>Cyanophyceae</taxon>
        <taxon>Synechococcales</taxon>
        <taxon>Prochlorococcaceae</taxon>
        <taxon>Prochlorococcus</taxon>
    </lineage>
</organism>
<gene>
    <name evidence="1" type="primary">rpmF</name>
    <name evidence="1" type="synonym">rpl32</name>
    <name type="ordered locus">PMT_0757</name>
</gene>
<dbReference type="EMBL" id="BX548175">
    <property type="protein sequence ID" value="CAE20932.1"/>
    <property type="molecule type" value="Genomic_DNA"/>
</dbReference>
<dbReference type="RefSeq" id="WP_011130135.1">
    <property type="nucleotide sequence ID" value="NC_005071.1"/>
</dbReference>
<dbReference type="SMR" id="Q7V7I8"/>
<dbReference type="KEGG" id="pmt:PMT_0757"/>
<dbReference type="eggNOG" id="COG0333">
    <property type="taxonomic scope" value="Bacteria"/>
</dbReference>
<dbReference type="HOGENOM" id="CLU_199882_0_0_3"/>
<dbReference type="Proteomes" id="UP000001423">
    <property type="component" value="Chromosome"/>
</dbReference>
<dbReference type="GO" id="GO:0015934">
    <property type="term" value="C:large ribosomal subunit"/>
    <property type="evidence" value="ECO:0007669"/>
    <property type="project" value="InterPro"/>
</dbReference>
<dbReference type="GO" id="GO:0003735">
    <property type="term" value="F:structural constituent of ribosome"/>
    <property type="evidence" value="ECO:0007669"/>
    <property type="project" value="InterPro"/>
</dbReference>
<dbReference type="GO" id="GO:0006412">
    <property type="term" value="P:translation"/>
    <property type="evidence" value="ECO:0007669"/>
    <property type="project" value="UniProtKB-UniRule"/>
</dbReference>
<dbReference type="Gene3D" id="1.20.5.640">
    <property type="entry name" value="Single helix bin"/>
    <property type="match status" value="1"/>
</dbReference>
<dbReference type="HAMAP" id="MF_00340">
    <property type="entry name" value="Ribosomal_bL32"/>
    <property type="match status" value="1"/>
</dbReference>
<dbReference type="InterPro" id="IPR002677">
    <property type="entry name" value="Ribosomal_bL32"/>
</dbReference>
<dbReference type="InterPro" id="IPR044958">
    <property type="entry name" value="Ribosomal_bL32_plant/cyanobact"/>
</dbReference>
<dbReference type="InterPro" id="IPR011332">
    <property type="entry name" value="Ribosomal_zn-bd"/>
</dbReference>
<dbReference type="NCBIfam" id="TIGR01031">
    <property type="entry name" value="rpmF_bact"/>
    <property type="match status" value="1"/>
</dbReference>
<dbReference type="PANTHER" id="PTHR36083">
    <property type="entry name" value="50S RIBOSOMAL PROTEIN L32, CHLOROPLASTIC"/>
    <property type="match status" value="1"/>
</dbReference>
<dbReference type="PANTHER" id="PTHR36083:SF1">
    <property type="entry name" value="LARGE RIBOSOMAL SUBUNIT PROTEIN BL32C"/>
    <property type="match status" value="1"/>
</dbReference>
<dbReference type="Pfam" id="PF01783">
    <property type="entry name" value="Ribosomal_L32p"/>
    <property type="match status" value="1"/>
</dbReference>
<dbReference type="SUPFAM" id="SSF57829">
    <property type="entry name" value="Zn-binding ribosomal proteins"/>
    <property type="match status" value="1"/>
</dbReference>
<keyword id="KW-1185">Reference proteome</keyword>
<keyword id="KW-0687">Ribonucleoprotein</keyword>
<keyword id="KW-0689">Ribosomal protein</keyword>
<protein>
    <recommendedName>
        <fullName evidence="1">Large ribosomal subunit protein bL32</fullName>
    </recommendedName>
    <alternativeName>
        <fullName evidence="2">50S ribosomal protein L32</fullName>
    </alternativeName>
</protein>